<reference key="1">
    <citation type="journal article" date="2010" name="J. Bacteriol.">
        <title>Complete genome sequence of the aerobic facultative methanotroph Methylocella silvestris BL2.</title>
        <authorList>
            <person name="Chen Y."/>
            <person name="Crombie A."/>
            <person name="Rahman M.T."/>
            <person name="Dedysh S.N."/>
            <person name="Liesack W."/>
            <person name="Stott M.B."/>
            <person name="Alam M."/>
            <person name="Theisen A.R."/>
            <person name="Murrell J.C."/>
            <person name="Dunfield P.F."/>
        </authorList>
    </citation>
    <scope>NUCLEOTIDE SEQUENCE [LARGE SCALE GENOMIC DNA]</scope>
    <source>
        <strain>DSM 15510 / CIP 108128 / LMG 27833 / NCIMB 13906 / BL2</strain>
    </source>
</reference>
<organism>
    <name type="scientific">Methylocella silvestris (strain DSM 15510 / CIP 108128 / LMG 27833 / NCIMB 13906 / BL2)</name>
    <dbReference type="NCBI Taxonomy" id="395965"/>
    <lineage>
        <taxon>Bacteria</taxon>
        <taxon>Pseudomonadati</taxon>
        <taxon>Pseudomonadota</taxon>
        <taxon>Alphaproteobacteria</taxon>
        <taxon>Hyphomicrobiales</taxon>
        <taxon>Beijerinckiaceae</taxon>
        <taxon>Methylocella</taxon>
    </lineage>
</organism>
<protein>
    <recommendedName>
        <fullName evidence="1">Peptide deformylase</fullName>
        <shortName evidence="1">PDF</shortName>
        <ecNumber evidence="1">3.5.1.88</ecNumber>
    </recommendedName>
    <alternativeName>
        <fullName evidence="1">Polypeptide deformylase</fullName>
    </alternativeName>
</protein>
<evidence type="ECO:0000255" key="1">
    <source>
        <dbReference type="HAMAP-Rule" id="MF_00163"/>
    </source>
</evidence>
<evidence type="ECO:0000256" key="2">
    <source>
        <dbReference type="SAM" id="MobiDB-lite"/>
    </source>
</evidence>
<name>DEF_METSB</name>
<feature type="chain" id="PRO_1000200739" description="Peptide deformylase">
    <location>
        <begin position="1"/>
        <end position="196"/>
    </location>
</feature>
<feature type="region of interest" description="Disordered" evidence="2">
    <location>
        <begin position="171"/>
        <end position="196"/>
    </location>
</feature>
<feature type="compositionally biased region" description="Basic and acidic residues" evidence="2">
    <location>
        <begin position="171"/>
        <end position="187"/>
    </location>
</feature>
<feature type="active site" evidence="1">
    <location>
        <position position="140"/>
    </location>
</feature>
<feature type="binding site" evidence="1">
    <location>
        <position position="97"/>
    </location>
    <ligand>
        <name>Fe cation</name>
        <dbReference type="ChEBI" id="CHEBI:24875"/>
    </ligand>
</feature>
<feature type="binding site" evidence="1">
    <location>
        <position position="139"/>
    </location>
    <ligand>
        <name>Fe cation</name>
        <dbReference type="ChEBI" id="CHEBI:24875"/>
    </ligand>
</feature>
<feature type="binding site" evidence="1">
    <location>
        <position position="143"/>
    </location>
    <ligand>
        <name>Fe cation</name>
        <dbReference type="ChEBI" id="CHEBI:24875"/>
    </ligand>
</feature>
<dbReference type="EC" id="3.5.1.88" evidence="1"/>
<dbReference type="EMBL" id="CP001280">
    <property type="protein sequence ID" value="ACK50097.1"/>
    <property type="molecule type" value="Genomic_DNA"/>
</dbReference>
<dbReference type="RefSeq" id="WP_012590167.1">
    <property type="nucleotide sequence ID" value="NC_011666.1"/>
</dbReference>
<dbReference type="SMR" id="B8ENG6"/>
<dbReference type="STRING" id="395965.Msil_1128"/>
<dbReference type="KEGG" id="msl:Msil_1128"/>
<dbReference type="eggNOG" id="COG0242">
    <property type="taxonomic scope" value="Bacteria"/>
</dbReference>
<dbReference type="HOGENOM" id="CLU_061901_2_0_5"/>
<dbReference type="OrthoDB" id="9804313at2"/>
<dbReference type="Proteomes" id="UP000002257">
    <property type="component" value="Chromosome"/>
</dbReference>
<dbReference type="GO" id="GO:0046872">
    <property type="term" value="F:metal ion binding"/>
    <property type="evidence" value="ECO:0007669"/>
    <property type="project" value="UniProtKB-KW"/>
</dbReference>
<dbReference type="GO" id="GO:0042586">
    <property type="term" value="F:peptide deformylase activity"/>
    <property type="evidence" value="ECO:0007669"/>
    <property type="project" value="UniProtKB-UniRule"/>
</dbReference>
<dbReference type="GO" id="GO:0043686">
    <property type="term" value="P:co-translational protein modification"/>
    <property type="evidence" value="ECO:0007669"/>
    <property type="project" value="TreeGrafter"/>
</dbReference>
<dbReference type="GO" id="GO:0006412">
    <property type="term" value="P:translation"/>
    <property type="evidence" value="ECO:0007669"/>
    <property type="project" value="UniProtKB-UniRule"/>
</dbReference>
<dbReference type="CDD" id="cd00487">
    <property type="entry name" value="Pep_deformylase"/>
    <property type="match status" value="1"/>
</dbReference>
<dbReference type="Gene3D" id="3.90.45.10">
    <property type="entry name" value="Peptide deformylase"/>
    <property type="match status" value="1"/>
</dbReference>
<dbReference type="HAMAP" id="MF_00163">
    <property type="entry name" value="Pep_deformylase"/>
    <property type="match status" value="1"/>
</dbReference>
<dbReference type="InterPro" id="IPR023635">
    <property type="entry name" value="Peptide_deformylase"/>
</dbReference>
<dbReference type="InterPro" id="IPR036821">
    <property type="entry name" value="Peptide_deformylase_sf"/>
</dbReference>
<dbReference type="NCBIfam" id="TIGR00079">
    <property type="entry name" value="pept_deformyl"/>
    <property type="match status" value="1"/>
</dbReference>
<dbReference type="NCBIfam" id="NF001159">
    <property type="entry name" value="PRK00150.1-3"/>
    <property type="match status" value="1"/>
</dbReference>
<dbReference type="PANTHER" id="PTHR10458">
    <property type="entry name" value="PEPTIDE DEFORMYLASE"/>
    <property type="match status" value="1"/>
</dbReference>
<dbReference type="PANTHER" id="PTHR10458:SF22">
    <property type="entry name" value="PEPTIDE DEFORMYLASE"/>
    <property type="match status" value="1"/>
</dbReference>
<dbReference type="Pfam" id="PF01327">
    <property type="entry name" value="Pep_deformylase"/>
    <property type="match status" value="1"/>
</dbReference>
<dbReference type="PIRSF" id="PIRSF004749">
    <property type="entry name" value="Pep_def"/>
    <property type="match status" value="1"/>
</dbReference>
<dbReference type="PRINTS" id="PR01576">
    <property type="entry name" value="PDEFORMYLASE"/>
</dbReference>
<dbReference type="SUPFAM" id="SSF56420">
    <property type="entry name" value="Peptide deformylase"/>
    <property type="match status" value="1"/>
</dbReference>
<comment type="function">
    <text evidence="1">Removes the formyl group from the N-terminal Met of newly synthesized proteins. Requires at least a dipeptide for an efficient rate of reaction. N-terminal L-methionine is a prerequisite for activity but the enzyme has broad specificity at other positions.</text>
</comment>
<comment type="catalytic activity">
    <reaction evidence="1">
        <text>N-terminal N-formyl-L-methionyl-[peptide] + H2O = N-terminal L-methionyl-[peptide] + formate</text>
        <dbReference type="Rhea" id="RHEA:24420"/>
        <dbReference type="Rhea" id="RHEA-COMP:10639"/>
        <dbReference type="Rhea" id="RHEA-COMP:10640"/>
        <dbReference type="ChEBI" id="CHEBI:15377"/>
        <dbReference type="ChEBI" id="CHEBI:15740"/>
        <dbReference type="ChEBI" id="CHEBI:49298"/>
        <dbReference type="ChEBI" id="CHEBI:64731"/>
        <dbReference type="EC" id="3.5.1.88"/>
    </reaction>
</comment>
<comment type="cofactor">
    <cofactor evidence="1">
        <name>Fe(2+)</name>
        <dbReference type="ChEBI" id="CHEBI:29033"/>
    </cofactor>
    <text evidence="1">Binds 1 Fe(2+) ion.</text>
</comment>
<comment type="similarity">
    <text evidence="1">Belongs to the polypeptide deformylase family.</text>
</comment>
<sequence>MPLRPIIILPDKRLRLVARPVASVDSEVRALMDDMLETMYEAPGIGLAATQIAVDRRVIVLDVAKRRDDSAKADPICLANPEILWASEELSSYEEGCLSIPEFYEEVFRPEKVRVGYLDRDGRRREIEADGLLATCLQHEIDHLNGVLFIDHISRLKRARIIKKFEKAAKLDAQEPKRAPHSPHTDAQKPGAASDL</sequence>
<accession>B8ENG6</accession>
<keyword id="KW-0378">Hydrolase</keyword>
<keyword id="KW-0408">Iron</keyword>
<keyword id="KW-0479">Metal-binding</keyword>
<keyword id="KW-0648">Protein biosynthesis</keyword>
<keyword id="KW-1185">Reference proteome</keyword>
<proteinExistence type="inferred from homology"/>
<gene>
    <name evidence="1" type="primary">def</name>
    <name type="ordered locus">Msil_1128</name>
</gene>